<reference key="1">
    <citation type="journal article" date="2001" name="Science">
        <title>Comparative genomics of Listeria species.</title>
        <authorList>
            <person name="Glaser P."/>
            <person name="Frangeul L."/>
            <person name="Buchrieser C."/>
            <person name="Rusniok C."/>
            <person name="Amend A."/>
            <person name="Baquero F."/>
            <person name="Berche P."/>
            <person name="Bloecker H."/>
            <person name="Brandt P."/>
            <person name="Chakraborty T."/>
            <person name="Charbit A."/>
            <person name="Chetouani F."/>
            <person name="Couve E."/>
            <person name="de Daruvar A."/>
            <person name="Dehoux P."/>
            <person name="Domann E."/>
            <person name="Dominguez-Bernal G."/>
            <person name="Duchaud E."/>
            <person name="Durant L."/>
            <person name="Dussurget O."/>
            <person name="Entian K.-D."/>
            <person name="Fsihi H."/>
            <person name="Garcia-del Portillo F."/>
            <person name="Garrido P."/>
            <person name="Gautier L."/>
            <person name="Goebel W."/>
            <person name="Gomez-Lopez N."/>
            <person name="Hain T."/>
            <person name="Hauf J."/>
            <person name="Jackson D."/>
            <person name="Jones L.-M."/>
            <person name="Kaerst U."/>
            <person name="Kreft J."/>
            <person name="Kuhn M."/>
            <person name="Kunst F."/>
            <person name="Kurapkat G."/>
            <person name="Madueno E."/>
            <person name="Maitournam A."/>
            <person name="Mata Vicente J."/>
            <person name="Ng E."/>
            <person name="Nedjari H."/>
            <person name="Nordsiek G."/>
            <person name="Novella S."/>
            <person name="de Pablos B."/>
            <person name="Perez-Diaz J.-C."/>
            <person name="Purcell R."/>
            <person name="Remmel B."/>
            <person name="Rose M."/>
            <person name="Schlueter T."/>
            <person name="Simoes N."/>
            <person name="Tierrez A."/>
            <person name="Vazquez-Boland J.-A."/>
            <person name="Voss H."/>
            <person name="Wehland J."/>
            <person name="Cossart P."/>
        </authorList>
    </citation>
    <scope>NUCLEOTIDE SEQUENCE [LARGE SCALE GENOMIC DNA]</scope>
    <source>
        <strain>ATCC BAA-679 / EGD-e</strain>
    </source>
</reference>
<organism>
    <name type="scientific">Listeria monocytogenes serovar 1/2a (strain ATCC BAA-679 / EGD-e)</name>
    <dbReference type="NCBI Taxonomy" id="169963"/>
    <lineage>
        <taxon>Bacteria</taxon>
        <taxon>Bacillati</taxon>
        <taxon>Bacillota</taxon>
        <taxon>Bacilli</taxon>
        <taxon>Bacillales</taxon>
        <taxon>Listeriaceae</taxon>
        <taxon>Listeria</taxon>
    </lineage>
</organism>
<proteinExistence type="inferred from homology"/>
<accession>Q8Y5R7</accession>
<evidence type="ECO:0000255" key="1">
    <source>
        <dbReference type="HAMAP-Rule" id="MF_01026"/>
    </source>
</evidence>
<protein>
    <recommendedName>
        <fullName evidence="1">3-isopropylmalate dehydratase large subunit</fullName>
        <ecNumber evidence="1">4.2.1.33</ecNumber>
    </recommendedName>
    <alternativeName>
        <fullName evidence="1">Alpha-IPM isomerase</fullName>
        <shortName evidence="1">IPMI</shortName>
    </alternativeName>
    <alternativeName>
        <fullName evidence="1">Isopropylmalate isomerase</fullName>
    </alternativeName>
</protein>
<sequence>MGKTLFDKLWNRHVIYGKEGEPQLLYVDLHLIHEVTSPQAFEGLRLENRPLRRPDKTFATMDHNVPTEDIFNIQDLVAKKQIEALQTNCAEFGVTLADMGSDRQGIVHMVGPETGLTQPGKVIVCGDSHTATHGAFGAIGFGIGSSEVEHVFATQTIWQQKPKSMGIEINGKLPKGVYAKDIILHLIATYGVAFGTGYAVEYYGETIRNMSMEERMTICNMAIEGGAKMGMMAPDETTFEYVRGREYAPTDMDKAISDWKTLQTDSDAEYDLHIKMDASILEPYVTWGTNPEMGVPFSKAFPEIKDMNYERAYEYMGLKPGQTAEQIELGYVFIGSCTNARLSDLEEAARIVKGNKVKNNIRALVVPGSRQVRNAAESIGLDKIFIEAGFEWREPGCSMCLGMNPDQVPDGVHCASTSNRNFEGRQGKGARTHLVSPAMAAAAAINGHFIDIRKVAVISGGN</sequence>
<feature type="chain" id="PRO_0000076758" description="3-isopropylmalate dehydratase large subunit">
    <location>
        <begin position="1"/>
        <end position="462"/>
    </location>
</feature>
<feature type="binding site" evidence="1">
    <location>
        <position position="337"/>
    </location>
    <ligand>
        <name>[4Fe-4S] cluster</name>
        <dbReference type="ChEBI" id="CHEBI:49883"/>
    </ligand>
</feature>
<feature type="binding site" evidence="1">
    <location>
        <position position="397"/>
    </location>
    <ligand>
        <name>[4Fe-4S] cluster</name>
        <dbReference type="ChEBI" id="CHEBI:49883"/>
    </ligand>
</feature>
<feature type="binding site" evidence="1">
    <location>
        <position position="400"/>
    </location>
    <ligand>
        <name>[4Fe-4S] cluster</name>
        <dbReference type="ChEBI" id="CHEBI:49883"/>
    </ligand>
</feature>
<keyword id="KW-0004">4Fe-4S</keyword>
<keyword id="KW-0028">Amino-acid biosynthesis</keyword>
<keyword id="KW-0100">Branched-chain amino acid biosynthesis</keyword>
<keyword id="KW-0408">Iron</keyword>
<keyword id="KW-0411">Iron-sulfur</keyword>
<keyword id="KW-0432">Leucine biosynthesis</keyword>
<keyword id="KW-0456">Lyase</keyword>
<keyword id="KW-0479">Metal-binding</keyword>
<keyword id="KW-1185">Reference proteome</keyword>
<dbReference type="EC" id="4.2.1.33" evidence="1"/>
<dbReference type="EMBL" id="AL591981">
    <property type="protein sequence ID" value="CAD00067.1"/>
    <property type="molecule type" value="Genomic_DNA"/>
</dbReference>
<dbReference type="PIR" id="AE1323">
    <property type="entry name" value="AE1323"/>
</dbReference>
<dbReference type="RefSeq" id="NP_465513.1">
    <property type="nucleotide sequence ID" value="NC_003210.1"/>
</dbReference>
<dbReference type="RefSeq" id="WP_010989859.1">
    <property type="nucleotide sequence ID" value="NZ_CP149495.1"/>
</dbReference>
<dbReference type="SMR" id="Q8Y5R7"/>
<dbReference type="STRING" id="169963.gene:17594674"/>
<dbReference type="PaxDb" id="169963-lmo1989"/>
<dbReference type="EnsemblBacteria" id="CAD00067">
    <property type="protein sequence ID" value="CAD00067"/>
    <property type="gene ID" value="CAD00067"/>
</dbReference>
<dbReference type="GeneID" id="985310"/>
<dbReference type="KEGG" id="lmo:lmo1989"/>
<dbReference type="PATRIC" id="fig|169963.11.peg.2036"/>
<dbReference type="eggNOG" id="COG0065">
    <property type="taxonomic scope" value="Bacteria"/>
</dbReference>
<dbReference type="HOGENOM" id="CLU_006714_3_4_9"/>
<dbReference type="OrthoDB" id="9802769at2"/>
<dbReference type="PhylomeDB" id="Q8Y5R7"/>
<dbReference type="BioCyc" id="LMON169963:LMO1989-MONOMER"/>
<dbReference type="UniPathway" id="UPA00048">
    <property type="reaction ID" value="UER00071"/>
</dbReference>
<dbReference type="Proteomes" id="UP000000817">
    <property type="component" value="Chromosome"/>
</dbReference>
<dbReference type="GO" id="GO:0003861">
    <property type="term" value="F:3-isopropylmalate dehydratase activity"/>
    <property type="evidence" value="ECO:0007669"/>
    <property type="project" value="UniProtKB-UniRule"/>
</dbReference>
<dbReference type="GO" id="GO:0051539">
    <property type="term" value="F:4 iron, 4 sulfur cluster binding"/>
    <property type="evidence" value="ECO:0007669"/>
    <property type="project" value="UniProtKB-KW"/>
</dbReference>
<dbReference type="GO" id="GO:0046872">
    <property type="term" value="F:metal ion binding"/>
    <property type="evidence" value="ECO:0007669"/>
    <property type="project" value="UniProtKB-KW"/>
</dbReference>
<dbReference type="GO" id="GO:0009098">
    <property type="term" value="P:L-leucine biosynthetic process"/>
    <property type="evidence" value="ECO:0007669"/>
    <property type="project" value="UniProtKB-UniRule"/>
</dbReference>
<dbReference type="CDD" id="cd01583">
    <property type="entry name" value="IPMI"/>
    <property type="match status" value="1"/>
</dbReference>
<dbReference type="FunFam" id="3.30.499.10:FF:000007">
    <property type="entry name" value="3-isopropylmalate dehydratase large subunit"/>
    <property type="match status" value="1"/>
</dbReference>
<dbReference type="Gene3D" id="3.30.499.10">
    <property type="entry name" value="Aconitase, domain 3"/>
    <property type="match status" value="2"/>
</dbReference>
<dbReference type="HAMAP" id="MF_01026">
    <property type="entry name" value="LeuC_type1"/>
    <property type="match status" value="1"/>
</dbReference>
<dbReference type="InterPro" id="IPR004430">
    <property type="entry name" value="3-IsopropMal_deHydase_lsu"/>
</dbReference>
<dbReference type="InterPro" id="IPR015931">
    <property type="entry name" value="Acnase/IPM_dHydase_lsu_aba_1/3"/>
</dbReference>
<dbReference type="InterPro" id="IPR001030">
    <property type="entry name" value="Acoase/IPM_deHydtase_lsu_aba"/>
</dbReference>
<dbReference type="InterPro" id="IPR018136">
    <property type="entry name" value="Aconitase_4Fe-4S_BS"/>
</dbReference>
<dbReference type="InterPro" id="IPR036008">
    <property type="entry name" value="Aconitase_4Fe-4S_dom"/>
</dbReference>
<dbReference type="InterPro" id="IPR050067">
    <property type="entry name" value="IPM_dehydratase_rel_enz"/>
</dbReference>
<dbReference type="InterPro" id="IPR033941">
    <property type="entry name" value="IPMI_cat"/>
</dbReference>
<dbReference type="NCBIfam" id="TIGR00170">
    <property type="entry name" value="leuC"/>
    <property type="match status" value="1"/>
</dbReference>
<dbReference type="NCBIfam" id="NF004016">
    <property type="entry name" value="PRK05478.1"/>
    <property type="match status" value="1"/>
</dbReference>
<dbReference type="NCBIfam" id="NF009116">
    <property type="entry name" value="PRK12466.1"/>
    <property type="match status" value="1"/>
</dbReference>
<dbReference type="PANTHER" id="PTHR43822:SF9">
    <property type="entry name" value="3-ISOPROPYLMALATE DEHYDRATASE"/>
    <property type="match status" value="1"/>
</dbReference>
<dbReference type="PANTHER" id="PTHR43822">
    <property type="entry name" value="HOMOACONITASE, MITOCHONDRIAL-RELATED"/>
    <property type="match status" value="1"/>
</dbReference>
<dbReference type="Pfam" id="PF00330">
    <property type="entry name" value="Aconitase"/>
    <property type="match status" value="1"/>
</dbReference>
<dbReference type="PRINTS" id="PR00415">
    <property type="entry name" value="ACONITASE"/>
</dbReference>
<dbReference type="SUPFAM" id="SSF53732">
    <property type="entry name" value="Aconitase iron-sulfur domain"/>
    <property type="match status" value="1"/>
</dbReference>
<dbReference type="PROSITE" id="PS00450">
    <property type="entry name" value="ACONITASE_1"/>
    <property type="match status" value="1"/>
</dbReference>
<dbReference type="PROSITE" id="PS01244">
    <property type="entry name" value="ACONITASE_2"/>
    <property type="match status" value="1"/>
</dbReference>
<gene>
    <name evidence="1" type="primary">leuC</name>
    <name type="ordered locus">lmo1989</name>
</gene>
<name>LEUC_LISMO</name>
<comment type="function">
    <text evidence="1">Catalyzes the isomerization between 2-isopropylmalate and 3-isopropylmalate, via the formation of 2-isopropylmaleate.</text>
</comment>
<comment type="catalytic activity">
    <reaction evidence="1">
        <text>(2R,3S)-3-isopropylmalate = (2S)-2-isopropylmalate</text>
        <dbReference type="Rhea" id="RHEA:32287"/>
        <dbReference type="ChEBI" id="CHEBI:1178"/>
        <dbReference type="ChEBI" id="CHEBI:35121"/>
        <dbReference type="EC" id="4.2.1.33"/>
    </reaction>
</comment>
<comment type="cofactor">
    <cofactor evidence="1">
        <name>[4Fe-4S] cluster</name>
        <dbReference type="ChEBI" id="CHEBI:49883"/>
    </cofactor>
    <text evidence="1">Binds 1 [4Fe-4S] cluster per subunit.</text>
</comment>
<comment type="pathway">
    <text evidence="1">Amino-acid biosynthesis; L-leucine biosynthesis; L-leucine from 3-methyl-2-oxobutanoate: step 2/4.</text>
</comment>
<comment type="subunit">
    <text evidence="1">Heterodimer of LeuC and LeuD.</text>
</comment>
<comment type="similarity">
    <text evidence="1">Belongs to the aconitase/IPM isomerase family. LeuC type 1 subfamily.</text>
</comment>